<feature type="signal peptide" evidence="1">
    <location>
        <begin position="1"/>
        <end position="17"/>
    </location>
</feature>
<feature type="chain" id="PRO_0000399443" description="Glycine, alanine and asparagine-rich protein" evidence="1">
    <location>
        <begin position="18"/>
        <end position="507"/>
    </location>
</feature>
<feature type="region of interest" description="Disordered" evidence="2">
    <location>
        <begin position="462"/>
        <end position="507"/>
    </location>
</feature>
<feature type="coiled-coil region" evidence="1">
    <location>
        <begin position="158"/>
        <end position="185"/>
    </location>
</feature>
<feature type="compositionally biased region" description="Gly residues" evidence="2">
    <location>
        <begin position="462"/>
        <end position="498"/>
    </location>
</feature>
<feature type="sequence conflict" description="In Ref. 1; GT275005." evidence="5" ref="1">
    <original>RN</original>
    <variation>LY</variation>
    <location>
        <begin position="26"/>
        <end position="27"/>
    </location>
</feature>
<feature type="sequence conflict" description="In Ref. 1; GT275313." evidence="5" ref="1">
    <original>SGGSGF</original>
    <variation>NGNGGN</variation>
    <location>
        <begin position="100"/>
        <end position="105"/>
    </location>
</feature>
<feature type="sequence conflict" description="In Ref. 1; GT274653." evidence="5" ref="1">
    <original>GSGFG</original>
    <variation>SPGN</variation>
    <location>
        <begin position="102"/>
        <end position="106"/>
    </location>
</feature>
<feature type="sequence conflict" description="In Ref. 1; GT275007." evidence="5" ref="1">
    <original>S</original>
    <variation>I</variation>
    <location>
        <position position="139"/>
    </location>
</feature>
<feature type="sequence conflict" description="In Ref. 1; GT274653." evidence="5" ref="1">
    <original>A</original>
    <variation>S</variation>
    <location>
        <position position="165"/>
    </location>
</feature>
<feature type="sequence conflict" description="In Ref. 1; GT274653." evidence="5" ref="1">
    <original>Q</original>
    <variation>H</variation>
    <location>
        <position position="178"/>
    </location>
</feature>
<feature type="sequence conflict" description="In Ref. 1; GT271728." evidence="5" ref="1">
    <original>EA</original>
    <variation>KP</variation>
    <location>
        <begin position="209"/>
        <end position="210"/>
    </location>
</feature>
<feature type="sequence conflict" description="In Ref. 1; GT276380." evidence="5" ref="1">
    <original>A</original>
    <variation>S</variation>
    <location>
        <position position="300"/>
    </location>
</feature>
<feature type="sequence conflict" description="In Ref. 1; GT276151." evidence="5" ref="1">
    <original>SA</original>
    <variation>FC</variation>
    <location>
        <begin position="325"/>
        <end position="326"/>
    </location>
</feature>
<feature type="sequence conflict" description="In Ref. 1; GT276151." evidence="5" ref="1">
    <original>A</original>
    <variation>T</variation>
    <location>
        <position position="332"/>
    </location>
</feature>
<feature type="sequence conflict" description="In Ref. 1; GT272926." evidence="5" ref="1">
    <original>G</original>
    <variation>R</variation>
    <location>
        <position position="432"/>
    </location>
</feature>
<feature type="sequence conflict" description="In Ref. 1; GT277720." evidence="5" ref="1">
    <original>G</original>
    <variation>R</variation>
    <location>
        <position position="462"/>
    </location>
</feature>
<feature type="sequence conflict" description="In Ref. 1; GT277518." evidence="5" ref="1">
    <original>G</original>
    <variation>R</variation>
    <location>
        <position position="496"/>
    </location>
</feature>
<reference evidence="5" key="1">
    <citation type="journal article" date="2010" name="Mol. Biol. Evol.">
        <title>Parallel evolution of nacre building gene sets in molluscs.</title>
        <authorList>
            <person name="Jackson D.J."/>
            <person name="McDougall C."/>
            <person name="Woodcroft B."/>
            <person name="Moase P."/>
            <person name="Rose R.A."/>
            <person name="Kube M."/>
            <person name="Reinhardt R."/>
            <person name="Rokhsar D.S."/>
            <person name="Montagnani C."/>
            <person name="Joubert C."/>
            <person name="Piquemal D."/>
            <person name="Degnan B.M."/>
        </authorList>
    </citation>
    <scope>NUCLEOTIDE SEQUENCE [MRNA]</scope>
    <scope>IDENTIFICATION</scope>
    <source>
        <tissue evidence="3">Mantle</tissue>
    </source>
</reference>
<reference evidence="5" key="2">
    <citation type="journal article" date="2010" name="Proteome Sci.">
        <title>Proteomic analysis of the organic matrix of the abalone Haliotis asinina calcified shell.</title>
        <authorList>
            <person name="Marie B."/>
            <person name="Marie A."/>
            <person name="Jackson D.J."/>
            <person name="Dubost L."/>
            <person name="Degnan B.M."/>
            <person name="Milet C."/>
            <person name="Marin F."/>
        </authorList>
    </citation>
    <scope>PROTEIN SEQUENCE OF 42-73; 286-293; 296-303; 330-339 AND 346-355</scope>
    <scope>SUBCELLULAR LOCATION</scope>
    <scope>TISSUE SPECIFICITY</scope>
    <source>
        <tissue evidence="4">Shell</tissue>
    </source>
</reference>
<protein>
    <recommendedName>
        <fullName>Glycine, alanine and asparagine-rich protein</fullName>
    </recommendedName>
</protein>
<proteinExistence type="evidence at protein level"/>
<dbReference type="EMBL" id="GT271728">
    <property type="status" value="NOT_ANNOTATED_CDS"/>
    <property type="molecule type" value="mRNA"/>
</dbReference>
<dbReference type="EMBL" id="GT272311">
    <property type="status" value="NOT_ANNOTATED_CDS"/>
    <property type="molecule type" value="mRNA"/>
</dbReference>
<dbReference type="EMBL" id="GT272436">
    <property type="status" value="NOT_ANNOTATED_CDS"/>
    <property type="molecule type" value="mRNA"/>
</dbReference>
<dbReference type="EMBL" id="GT272926">
    <property type="status" value="NOT_ANNOTATED_CDS"/>
    <property type="molecule type" value="mRNA"/>
</dbReference>
<dbReference type="EMBL" id="GT273587">
    <property type="status" value="NOT_ANNOTATED_CDS"/>
    <property type="molecule type" value="mRNA"/>
</dbReference>
<dbReference type="EMBL" id="GT274163">
    <property type="status" value="NOT_ANNOTATED_CDS"/>
    <property type="molecule type" value="mRNA"/>
</dbReference>
<dbReference type="EMBL" id="GT274619">
    <property type="status" value="NOT_ANNOTATED_CDS"/>
    <property type="molecule type" value="mRNA"/>
</dbReference>
<dbReference type="EMBL" id="GT274653">
    <property type="status" value="NOT_ANNOTATED_CDS"/>
    <property type="molecule type" value="mRNA"/>
</dbReference>
<dbReference type="EMBL" id="GT274865">
    <property type="status" value="NOT_ANNOTATED_CDS"/>
    <property type="molecule type" value="mRNA"/>
</dbReference>
<dbReference type="EMBL" id="GT275005">
    <property type="status" value="NOT_ANNOTATED_CDS"/>
    <property type="molecule type" value="mRNA"/>
</dbReference>
<dbReference type="EMBL" id="GT275007">
    <property type="status" value="NOT_ANNOTATED_CDS"/>
    <property type="molecule type" value="mRNA"/>
</dbReference>
<dbReference type="EMBL" id="GT275313">
    <property type="status" value="NOT_ANNOTATED_CDS"/>
    <property type="molecule type" value="mRNA"/>
</dbReference>
<dbReference type="EMBL" id="GT276380">
    <property type="status" value="NOT_ANNOTATED_CDS"/>
    <property type="molecule type" value="mRNA"/>
</dbReference>
<dbReference type="EMBL" id="GT276151">
    <property type="status" value="NOT_ANNOTATED_CDS"/>
    <property type="molecule type" value="mRNA"/>
</dbReference>
<dbReference type="EMBL" id="GT277518">
    <property type="status" value="NOT_ANNOTATED_CDS"/>
    <property type="molecule type" value="mRNA"/>
</dbReference>
<dbReference type="EMBL" id="GT277720">
    <property type="status" value="NOT_ANNOTATED_CDS"/>
    <property type="molecule type" value="mRNA"/>
</dbReference>
<dbReference type="EMBL" id="EZ420619">
    <property type="status" value="NOT_ANNOTATED_CDS"/>
    <property type="molecule type" value="mRNA"/>
</dbReference>
<dbReference type="GO" id="GO:0005576">
    <property type="term" value="C:extracellular region"/>
    <property type="evidence" value="ECO:0000314"/>
    <property type="project" value="UniProtKB"/>
</dbReference>
<dbReference type="PRINTS" id="PR01228">
    <property type="entry name" value="EGGSHELL"/>
</dbReference>
<organism>
    <name type="scientific">Haliotis asinina</name>
    <name type="common">Donkey's ear abalone</name>
    <name type="synonym">Ass's ear abalone</name>
    <dbReference type="NCBI Taxonomy" id="109174"/>
    <lineage>
        <taxon>Eukaryota</taxon>
        <taxon>Metazoa</taxon>
        <taxon>Spiralia</taxon>
        <taxon>Lophotrochozoa</taxon>
        <taxon>Mollusca</taxon>
        <taxon>Gastropoda</taxon>
        <taxon>Vetigastropoda</taxon>
        <taxon>Lepetellida</taxon>
        <taxon>Haliotoidea</taxon>
        <taxon>Haliotidae</taxon>
        <taxon>Haliotis</taxon>
    </lineage>
</organism>
<sequence>MLRVPLLVLCLALSVGADYYGYGWGRNGGGGGSGGGSGSSRASASASASARANSIGNLVGRLTSLVDASASARASASANAGGFGGSGAGGSGGNGFGGGSGGSGFGGGSGGSGFGGGSGGSGFGGGSGGSGFGGGSGGSGFGGGSGGSGFGGASASASAQALASATAELQAAQDAYDQASAYAEATARAAANGGSLDSSALASAIASAEASVSARGASIIARARARAEATVRAARRSFASAQASAEASVSAVRSAEGRARSFARAVARARASARAAIAGVRSSGRAFASATARARASVSAAARAVARARAQAVARARASIRASASASARASASAAAEARAAAYARVQVAAAAAARAAASAASASASASASGSSFGSGGSGGSGNGGFGSFGASANAVANAFAQAFGGGLGNGGNGGNGNGGNGGNGGNGNGGNGGNGNGGNGGNGNGGNGGNGGNGNGGNGGNGNGGNGRNGNGGNGRNGNGGNGGNGNGRNGRGGRYYYGSSDYYY</sequence>
<keyword id="KW-0175">Coiled coil</keyword>
<keyword id="KW-0903">Direct protein sequencing</keyword>
<keyword id="KW-0964">Secreted</keyword>
<keyword id="KW-0732">Signal</keyword>
<evidence type="ECO:0000255" key="1"/>
<evidence type="ECO:0000256" key="2">
    <source>
        <dbReference type="SAM" id="MobiDB-lite"/>
    </source>
</evidence>
<evidence type="ECO:0000269" key="3">
    <source>
    </source>
</evidence>
<evidence type="ECO:0000269" key="4">
    <source>
    </source>
</evidence>
<evidence type="ECO:0000305" key="5"/>
<comment type="subcellular location">
    <subcellularLocation>
        <location evidence="4">Secreted</location>
    </subcellularLocation>
</comment>
<comment type="tissue specificity">
    <text evidence="4">Component of the acid-soluble and acid-insoluble organic matrix of calcified shell layers (at protein level).</text>
</comment>
<accession>P86732</accession>
<name>GAAP_HALAI</name>